<proteinExistence type="inferred from homology"/>
<evidence type="ECO:0000255" key="1">
    <source>
        <dbReference type="HAMAP-Rule" id="MF_00127"/>
    </source>
</evidence>
<organism>
    <name type="scientific">Staphylococcus aureus (strain COL)</name>
    <dbReference type="NCBI Taxonomy" id="93062"/>
    <lineage>
        <taxon>Bacteria</taxon>
        <taxon>Bacillati</taxon>
        <taxon>Bacillota</taxon>
        <taxon>Bacilli</taxon>
        <taxon>Bacillales</taxon>
        <taxon>Staphylococcaceae</taxon>
        <taxon>Staphylococcus</taxon>
    </lineage>
</organism>
<accession>Q5HFD2</accession>
<name>SYH_STAAC</name>
<feature type="chain" id="PRO_0000136250" description="Histidine--tRNA ligase">
    <location>
        <begin position="1"/>
        <end position="420"/>
    </location>
</feature>
<comment type="catalytic activity">
    <reaction evidence="1">
        <text>tRNA(His) + L-histidine + ATP = L-histidyl-tRNA(His) + AMP + diphosphate + H(+)</text>
        <dbReference type="Rhea" id="RHEA:17313"/>
        <dbReference type="Rhea" id="RHEA-COMP:9665"/>
        <dbReference type="Rhea" id="RHEA-COMP:9689"/>
        <dbReference type="ChEBI" id="CHEBI:15378"/>
        <dbReference type="ChEBI" id="CHEBI:30616"/>
        <dbReference type="ChEBI" id="CHEBI:33019"/>
        <dbReference type="ChEBI" id="CHEBI:57595"/>
        <dbReference type="ChEBI" id="CHEBI:78442"/>
        <dbReference type="ChEBI" id="CHEBI:78527"/>
        <dbReference type="ChEBI" id="CHEBI:456215"/>
        <dbReference type="EC" id="6.1.1.21"/>
    </reaction>
</comment>
<comment type="subunit">
    <text evidence="1">Homodimer.</text>
</comment>
<comment type="subcellular location">
    <subcellularLocation>
        <location evidence="1">Cytoplasm</location>
    </subcellularLocation>
</comment>
<comment type="similarity">
    <text evidence="1">Belongs to the class-II aminoacyl-tRNA synthetase family.</text>
</comment>
<reference key="1">
    <citation type="journal article" date="2005" name="J. Bacteriol.">
        <title>Insights on evolution of virulence and resistance from the complete genome analysis of an early methicillin-resistant Staphylococcus aureus strain and a biofilm-producing methicillin-resistant Staphylococcus epidermidis strain.</title>
        <authorList>
            <person name="Gill S.R."/>
            <person name="Fouts D.E."/>
            <person name="Archer G.L."/>
            <person name="Mongodin E.F."/>
            <person name="DeBoy R.T."/>
            <person name="Ravel J."/>
            <person name="Paulsen I.T."/>
            <person name="Kolonay J.F."/>
            <person name="Brinkac L.M."/>
            <person name="Beanan M.J."/>
            <person name="Dodson R.J."/>
            <person name="Daugherty S.C."/>
            <person name="Madupu R."/>
            <person name="Angiuoli S.V."/>
            <person name="Durkin A.S."/>
            <person name="Haft D.H."/>
            <person name="Vamathevan J.J."/>
            <person name="Khouri H."/>
            <person name="Utterback T.R."/>
            <person name="Lee C."/>
            <person name="Dimitrov G."/>
            <person name="Jiang L."/>
            <person name="Qin H."/>
            <person name="Weidman J."/>
            <person name="Tran K."/>
            <person name="Kang K.H."/>
            <person name="Hance I.R."/>
            <person name="Nelson K.E."/>
            <person name="Fraser C.M."/>
        </authorList>
    </citation>
    <scope>NUCLEOTIDE SEQUENCE [LARGE SCALE GENOMIC DNA]</scope>
    <source>
        <strain>COL</strain>
    </source>
</reference>
<gene>
    <name evidence="1" type="primary">hisS</name>
    <name type="ordered locus">SACOL1686</name>
</gene>
<protein>
    <recommendedName>
        <fullName evidence="1">Histidine--tRNA ligase</fullName>
        <ecNumber evidence="1">6.1.1.21</ecNumber>
    </recommendedName>
    <alternativeName>
        <fullName evidence="1">Histidyl-tRNA synthetase</fullName>
        <shortName evidence="1">HisRS</shortName>
    </alternativeName>
</protein>
<sequence>MIKIPRGTQDILPEDSKKWRYIENQLDELMTFYNYKEIRTPIFESTDLFARGVGDSTDVVQKEMYTFKDKGDRSITLRPEGTAAVVRSYIEHKMQGNPNQPIKLYYNGPMFRYERKQKGRYRQFNQFGVEAIGAENPSVDAEVLAMVMHIYQSFGLKHLKLVINSVGDMASRKEYNEALVKHFEPVIHEFCSDCQSRLHTNPMRILDCKVDRDKEAIKTAPRITDFLNEESKAYYEQVKAYLDDLGIPYIEDPNLVRGLDYYTHTAFELMMDNPNYDGAITTLCGGGRYNGLLELLDGPSETGIGFALSIERLLLALEEEGIELDIEENLDLFIVTMGDQADRYAVKLLNHLRHNGIKADKDYLQRKIKGQMKQADRLGAKFTIVIGDQELENNKIDVKNMTTGESETIELDALVEYFKK</sequence>
<keyword id="KW-0030">Aminoacyl-tRNA synthetase</keyword>
<keyword id="KW-0067">ATP-binding</keyword>
<keyword id="KW-0963">Cytoplasm</keyword>
<keyword id="KW-0436">Ligase</keyword>
<keyword id="KW-0547">Nucleotide-binding</keyword>
<keyword id="KW-0648">Protein biosynthesis</keyword>
<dbReference type="EC" id="6.1.1.21" evidence="1"/>
<dbReference type="EMBL" id="CP000046">
    <property type="protein sequence ID" value="AAW36792.1"/>
    <property type="molecule type" value="Genomic_DNA"/>
</dbReference>
<dbReference type="RefSeq" id="WP_000590826.1">
    <property type="nucleotide sequence ID" value="NZ_JBGOFO010000003.1"/>
</dbReference>
<dbReference type="SMR" id="Q5HFD2"/>
<dbReference type="KEGG" id="sac:SACOL1686"/>
<dbReference type="HOGENOM" id="CLU_025113_1_1_9"/>
<dbReference type="Proteomes" id="UP000000530">
    <property type="component" value="Chromosome"/>
</dbReference>
<dbReference type="GO" id="GO:0005737">
    <property type="term" value="C:cytoplasm"/>
    <property type="evidence" value="ECO:0007669"/>
    <property type="project" value="UniProtKB-SubCell"/>
</dbReference>
<dbReference type="GO" id="GO:0005524">
    <property type="term" value="F:ATP binding"/>
    <property type="evidence" value="ECO:0007669"/>
    <property type="project" value="UniProtKB-UniRule"/>
</dbReference>
<dbReference type="GO" id="GO:0140096">
    <property type="term" value="F:catalytic activity, acting on a protein"/>
    <property type="evidence" value="ECO:0007669"/>
    <property type="project" value="UniProtKB-ARBA"/>
</dbReference>
<dbReference type="GO" id="GO:0004821">
    <property type="term" value="F:histidine-tRNA ligase activity"/>
    <property type="evidence" value="ECO:0007669"/>
    <property type="project" value="UniProtKB-UniRule"/>
</dbReference>
<dbReference type="GO" id="GO:0016740">
    <property type="term" value="F:transferase activity"/>
    <property type="evidence" value="ECO:0007669"/>
    <property type="project" value="UniProtKB-ARBA"/>
</dbReference>
<dbReference type="GO" id="GO:0006427">
    <property type="term" value="P:histidyl-tRNA aminoacylation"/>
    <property type="evidence" value="ECO:0007669"/>
    <property type="project" value="UniProtKB-UniRule"/>
</dbReference>
<dbReference type="CDD" id="cd00738">
    <property type="entry name" value="HGTP_anticodon"/>
    <property type="match status" value="1"/>
</dbReference>
<dbReference type="CDD" id="cd00773">
    <property type="entry name" value="HisRS-like_core"/>
    <property type="match status" value="1"/>
</dbReference>
<dbReference type="FunFam" id="3.30.930.10:FF:000005">
    <property type="entry name" value="Histidine--tRNA ligase"/>
    <property type="match status" value="1"/>
</dbReference>
<dbReference type="Gene3D" id="3.40.50.800">
    <property type="entry name" value="Anticodon-binding domain"/>
    <property type="match status" value="1"/>
</dbReference>
<dbReference type="Gene3D" id="3.30.930.10">
    <property type="entry name" value="Bira Bifunctional Protein, Domain 2"/>
    <property type="match status" value="1"/>
</dbReference>
<dbReference type="HAMAP" id="MF_00127">
    <property type="entry name" value="His_tRNA_synth"/>
    <property type="match status" value="1"/>
</dbReference>
<dbReference type="InterPro" id="IPR006195">
    <property type="entry name" value="aa-tRNA-synth_II"/>
</dbReference>
<dbReference type="InterPro" id="IPR045864">
    <property type="entry name" value="aa-tRNA-synth_II/BPL/LPL"/>
</dbReference>
<dbReference type="InterPro" id="IPR004154">
    <property type="entry name" value="Anticodon-bd"/>
</dbReference>
<dbReference type="InterPro" id="IPR036621">
    <property type="entry name" value="Anticodon-bd_dom_sf"/>
</dbReference>
<dbReference type="InterPro" id="IPR015807">
    <property type="entry name" value="His-tRNA-ligase"/>
</dbReference>
<dbReference type="InterPro" id="IPR041715">
    <property type="entry name" value="HisRS-like_core"/>
</dbReference>
<dbReference type="InterPro" id="IPR004516">
    <property type="entry name" value="HisRS/HisZ"/>
</dbReference>
<dbReference type="NCBIfam" id="TIGR00442">
    <property type="entry name" value="hisS"/>
    <property type="match status" value="1"/>
</dbReference>
<dbReference type="PANTHER" id="PTHR43707:SF1">
    <property type="entry name" value="HISTIDINE--TRNA LIGASE, MITOCHONDRIAL-RELATED"/>
    <property type="match status" value="1"/>
</dbReference>
<dbReference type="PANTHER" id="PTHR43707">
    <property type="entry name" value="HISTIDYL-TRNA SYNTHETASE"/>
    <property type="match status" value="1"/>
</dbReference>
<dbReference type="Pfam" id="PF03129">
    <property type="entry name" value="HGTP_anticodon"/>
    <property type="match status" value="1"/>
</dbReference>
<dbReference type="Pfam" id="PF13393">
    <property type="entry name" value="tRNA-synt_His"/>
    <property type="match status" value="1"/>
</dbReference>
<dbReference type="PIRSF" id="PIRSF001549">
    <property type="entry name" value="His-tRNA_synth"/>
    <property type="match status" value="1"/>
</dbReference>
<dbReference type="SUPFAM" id="SSF52954">
    <property type="entry name" value="Class II aaRS ABD-related"/>
    <property type="match status" value="1"/>
</dbReference>
<dbReference type="SUPFAM" id="SSF55681">
    <property type="entry name" value="Class II aaRS and biotin synthetases"/>
    <property type="match status" value="1"/>
</dbReference>
<dbReference type="PROSITE" id="PS50862">
    <property type="entry name" value="AA_TRNA_LIGASE_II"/>
    <property type="match status" value="1"/>
</dbReference>